<sequence length="72" mass="8150">MLNPPLNQLTSQIKSKYLIATTAAKRAREIDEQPETELLSEYHSFKPVGRALEEIADGKIRPVISSDYYGKE</sequence>
<feature type="chain" id="PRO_0000128980" description="DNA-directed RNA polymerase subunit omega">
    <location>
        <begin position="1"/>
        <end position="72"/>
    </location>
</feature>
<accession>Q6GHM5</accession>
<reference key="1">
    <citation type="journal article" date="2004" name="Proc. Natl. Acad. Sci. U.S.A.">
        <title>Complete genomes of two clinical Staphylococcus aureus strains: evidence for the rapid evolution of virulence and drug resistance.</title>
        <authorList>
            <person name="Holden M.T.G."/>
            <person name="Feil E.J."/>
            <person name="Lindsay J.A."/>
            <person name="Peacock S.J."/>
            <person name="Day N.P.J."/>
            <person name="Enright M.C."/>
            <person name="Foster T.J."/>
            <person name="Moore C.E."/>
            <person name="Hurst L."/>
            <person name="Atkin R."/>
            <person name="Barron A."/>
            <person name="Bason N."/>
            <person name="Bentley S.D."/>
            <person name="Chillingworth C."/>
            <person name="Chillingworth T."/>
            <person name="Churcher C."/>
            <person name="Clark L."/>
            <person name="Corton C."/>
            <person name="Cronin A."/>
            <person name="Doggett J."/>
            <person name="Dowd L."/>
            <person name="Feltwell T."/>
            <person name="Hance Z."/>
            <person name="Harris B."/>
            <person name="Hauser H."/>
            <person name="Holroyd S."/>
            <person name="Jagels K."/>
            <person name="James K.D."/>
            <person name="Lennard N."/>
            <person name="Line A."/>
            <person name="Mayes R."/>
            <person name="Moule S."/>
            <person name="Mungall K."/>
            <person name="Ormond D."/>
            <person name="Quail M.A."/>
            <person name="Rabbinowitsch E."/>
            <person name="Rutherford K.M."/>
            <person name="Sanders M."/>
            <person name="Sharp S."/>
            <person name="Simmonds M."/>
            <person name="Stevens K."/>
            <person name="Whitehead S."/>
            <person name="Barrell B.G."/>
            <person name="Spratt B.G."/>
            <person name="Parkhill J."/>
        </authorList>
    </citation>
    <scope>NUCLEOTIDE SEQUENCE [LARGE SCALE GENOMIC DNA]</scope>
    <source>
        <strain>MRSA252</strain>
    </source>
</reference>
<keyword id="KW-0240">DNA-directed RNA polymerase</keyword>
<keyword id="KW-0548">Nucleotidyltransferase</keyword>
<keyword id="KW-0804">Transcription</keyword>
<keyword id="KW-0808">Transferase</keyword>
<comment type="function">
    <text evidence="1">Promotes RNA polymerase assembly. Latches the N- and C-terminal regions of the beta' subunit thereby facilitating its interaction with the beta and alpha subunits.</text>
</comment>
<comment type="catalytic activity">
    <reaction evidence="1">
        <text>RNA(n) + a ribonucleoside 5'-triphosphate = RNA(n+1) + diphosphate</text>
        <dbReference type="Rhea" id="RHEA:21248"/>
        <dbReference type="Rhea" id="RHEA-COMP:14527"/>
        <dbReference type="Rhea" id="RHEA-COMP:17342"/>
        <dbReference type="ChEBI" id="CHEBI:33019"/>
        <dbReference type="ChEBI" id="CHEBI:61557"/>
        <dbReference type="ChEBI" id="CHEBI:140395"/>
        <dbReference type="EC" id="2.7.7.6"/>
    </reaction>
</comment>
<comment type="subunit">
    <text evidence="1">The RNAP catalytic core consists of 2 alpha, 1 beta, 1 beta' and 1 omega subunit. When a sigma factor is associated with the core the holoenzyme is formed, which can initiate transcription.</text>
</comment>
<comment type="similarity">
    <text evidence="1">Belongs to the RNA polymerase subunit omega family.</text>
</comment>
<proteinExistence type="inferred from homology"/>
<organism>
    <name type="scientific">Staphylococcus aureus (strain MRSA252)</name>
    <dbReference type="NCBI Taxonomy" id="282458"/>
    <lineage>
        <taxon>Bacteria</taxon>
        <taxon>Bacillati</taxon>
        <taxon>Bacillota</taxon>
        <taxon>Bacilli</taxon>
        <taxon>Bacillales</taxon>
        <taxon>Staphylococcaceae</taxon>
        <taxon>Staphylococcus</taxon>
    </lineage>
</organism>
<protein>
    <recommendedName>
        <fullName evidence="1">DNA-directed RNA polymerase subunit omega</fullName>
        <shortName evidence="1">RNAP omega subunit</shortName>
        <ecNumber evidence="1">2.7.7.6</ecNumber>
    </recommendedName>
    <alternativeName>
        <fullName evidence="1">RNA polymerase omega subunit</fullName>
    </alternativeName>
    <alternativeName>
        <fullName evidence="1">Transcriptase subunit omega</fullName>
    </alternativeName>
</protein>
<name>RPOZ_STAAR</name>
<gene>
    <name evidence="1" type="primary">rpoZ</name>
    <name type="ordered locus">SAR1186</name>
</gene>
<dbReference type="EC" id="2.7.7.6" evidence="1"/>
<dbReference type="EMBL" id="BX571856">
    <property type="protein sequence ID" value="CAG40188.1"/>
    <property type="molecule type" value="Genomic_DNA"/>
</dbReference>
<dbReference type="RefSeq" id="WP_000933956.1">
    <property type="nucleotide sequence ID" value="NC_002952.2"/>
</dbReference>
<dbReference type="SMR" id="Q6GHM5"/>
<dbReference type="KEGG" id="sar:SAR1186"/>
<dbReference type="HOGENOM" id="CLU_125406_6_0_9"/>
<dbReference type="Proteomes" id="UP000000596">
    <property type="component" value="Chromosome"/>
</dbReference>
<dbReference type="GO" id="GO:0000428">
    <property type="term" value="C:DNA-directed RNA polymerase complex"/>
    <property type="evidence" value="ECO:0007669"/>
    <property type="project" value="UniProtKB-KW"/>
</dbReference>
<dbReference type="GO" id="GO:0003677">
    <property type="term" value="F:DNA binding"/>
    <property type="evidence" value="ECO:0007669"/>
    <property type="project" value="UniProtKB-UniRule"/>
</dbReference>
<dbReference type="GO" id="GO:0003899">
    <property type="term" value="F:DNA-directed RNA polymerase activity"/>
    <property type="evidence" value="ECO:0007669"/>
    <property type="project" value="UniProtKB-UniRule"/>
</dbReference>
<dbReference type="GO" id="GO:0006351">
    <property type="term" value="P:DNA-templated transcription"/>
    <property type="evidence" value="ECO:0007669"/>
    <property type="project" value="UniProtKB-UniRule"/>
</dbReference>
<dbReference type="Gene3D" id="3.90.940.10">
    <property type="match status" value="1"/>
</dbReference>
<dbReference type="HAMAP" id="MF_00366">
    <property type="entry name" value="RNApol_bact_RpoZ"/>
    <property type="match status" value="1"/>
</dbReference>
<dbReference type="InterPro" id="IPR003716">
    <property type="entry name" value="DNA-dir_RNA_pol_omega"/>
</dbReference>
<dbReference type="InterPro" id="IPR006110">
    <property type="entry name" value="Pol_omega/Rpo6/RPB6"/>
</dbReference>
<dbReference type="InterPro" id="IPR036161">
    <property type="entry name" value="RPB6/omega-like_sf"/>
</dbReference>
<dbReference type="NCBIfam" id="TIGR00690">
    <property type="entry name" value="rpoZ"/>
    <property type="match status" value="1"/>
</dbReference>
<dbReference type="PANTHER" id="PTHR34476">
    <property type="entry name" value="DNA-DIRECTED RNA POLYMERASE SUBUNIT OMEGA"/>
    <property type="match status" value="1"/>
</dbReference>
<dbReference type="PANTHER" id="PTHR34476:SF1">
    <property type="entry name" value="DNA-DIRECTED RNA POLYMERASE SUBUNIT OMEGA"/>
    <property type="match status" value="1"/>
</dbReference>
<dbReference type="Pfam" id="PF01192">
    <property type="entry name" value="RNA_pol_Rpb6"/>
    <property type="match status" value="1"/>
</dbReference>
<dbReference type="SMART" id="SM01409">
    <property type="entry name" value="RNA_pol_Rpb6"/>
    <property type="match status" value="1"/>
</dbReference>
<dbReference type="SUPFAM" id="SSF63562">
    <property type="entry name" value="RPB6/omega subunit-like"/>
    <property type="match status" value="1"/>
</dbReference>
<evidence type="ECO:0000255" key="1">
    <source>
        <dbReference type="HAMAP-Rule" id="MF_00366"/>
    </source>
</evidence>